<sequence>MKKSAVLNEHISKAIATIGHFDLLTINDAGMPIPNDHRRIDLAVTKNLPRFIDVLATVLEEMEIQKIYLAEEIKEHNPTQLQQIKQLISSEIEIIFIPHEEMKSNLAHPLNKGNIRTGETTPYSNIALESNVTF</sequence>
<gene>
    <name evidence="1" type="primary">rbsD</name>
    <name type="ordered locus">SA0259</name>
</gene>
<dbReference type="EC" id="5.4.99.62" evidence="1"/>
<dbReference type="EMBL" id="BA000018">
    <property type="protein sequence ID" value="BAB41483.1"/>
    <property type="molecule type" value="Genomic_DNA"/>
</dbReference>
<dbReference type="PIR" id="H89790">
    <property type="entry name" value="H89790"/>
</dbReference>
<dbReference type="RefSeq" id="WP_000747873.1">
    <property type="nucleotide sequence ID" value="NC_002745.2"/>
</dbReference>
<dbReference type="SMR" id="Q7A7T6"/>
<dbReference type="EnsemblBacteria" id="BAB41483">
    <property type="protein sequence ID" value="BAB41483"/>
    <property type="gene ID" value="BAB41483"/>
</dbReference>
<dbReference type="KEGG" id="sau:SA0259"/>
<dbReference type="HOGENOM" id="CLU_135498_0_0_9"/>
<dbReference type="UniPathway" id="UPA00916">
    <property type="reaction ID" value="UER00888"/>
</dbReference>
<dbReference type="GO" id="GO:0005829">
    <property type="term" value="C:cytosol"/>
    <property type="evidence" value="ECO:0007669"/>
    <property type="project" value="TreeGrafter"/>
</dbReference>
<dbReference type="GO" id="GO:0062193">
    <property type="term" value="F:D-ribose pyranase activity"/>
    <property type="evidence" value="ECO:0007669"/>
    <property type="project" value="UniProtKB-EC"/>
</dbReference>
<dbReference type="GO" id="GO:0016872">
    <property type="term" value="F:intramolecular lyase activity"/>
    <property type="evidence" value="ECO:0007669"/>
    <property type="project" value="UniProtKB-UniRule"/>
</dbReference>
<dbReference type="GO" id="GO:0048029">
    <property type="term" value="F:monosaccharide binding"/>
    <property type="evidence" value="ECO:0007669"/>
    <property type="project" value="InterPro"/>
</dbReference>
<dbReference type="GO" id="GO:0019303">
    <property type="term" value="P:D-ribose catabolic process"/>
    <property type="evidence" value="ECO:0007669"/>
    <property type="project" value="UniProtKB-UniRule"/>
</dbReference>
<dbReference type="FunFam" id="3.40.1650.10:FF:000004">
    <property type="entry name" value="D-ribose pyranase"/>
    <property type="match status" value="1"/>
</dbReference>
<dbReference type="Gene3D" id="3.40.1650.10">
    <property type="entry name" value="RbsD-like domain"/>
    <property type="match status" value="1"/>
</dbReference>
<dbReference type="HAMAP" id="MF_01661">
    <property type="entry name" value="D_rib_pyranase"/>
    <property type="match status" value="1"/>
</dbReference>
<dbReference type="InterPro" id="IPR023064">
    <property type="entry name" value="D-ribose_pyranase"/>
</dbReference>
<dbReference type="InterPro" id="IPR023750">
    <property type="entry name" value="RbsD-like_sf"/>
</dbReference>
<dbReference type="InterPro" id="IPR007721">
    <property type="entry name" value="RbsD_FucU"/>
</dbReference>
<dbReference type="NCBIfam" id="NF008761">
    <property type="entry name" value="PRK11797.1"/>
    <property type="match status" value="1"/>
</dbReference>
<dbReference type="PANTHER" id="PTHR37831">
    <property type="entry name" value="D-RIBOSE PYRANASE"/>
    <property type="match status" value="1"/>
</dbReference>
<dbReference type="PANTHER" id="PTHR37831:SF1">
    <property type="entry name" value="D-RIBOSE PYRANASE"/>
    <property type="match status" value="1"/>
</dbReference>
<dbReference type="Pfam" id="PF05025">
    <property type="entry name" value="RbsD_FucU"/>
    <property type="match status" value="1"/>
</dbReference>
<dbReference type="SUPFAM" id="SSF102546">
    <property type="entry name" value="RbsD-like"/>
    <property type="match status" value="1"/>
</dbReference>
<reference key="1">
    <citation type="journal article" date="2001" name="Lancet">
        <title>Whole genome sequencing of meticillin-resistant Staphylococcus aureus.</title>
        <authorList>
            <person name="Kuroda M."/>
            <person name="Ohta T."/>
            <person name="Uchiyama I."/>
            <person name="Baba T."/>
            <person name="Yuzawa H."/>
            <person name="Kobayashi I."/>
            <person name="Cui L."/>
            <person name="Oguchi A."/>
            <person name="Aoki K."/>
            <person name="Nagai Y."/>
            <person name="Lian J.-Q."/>
            <person name="Ito T."/>
            <person name="Kanamori M."/>
            <person name="Matsumaru H."/>
            <person name="Maruyama A."/>
            <person name="Murakami H."/>
            <person name="Hosoyama A."/>
            <person name="Mizutani-Ui Y."/>
            <person name="Takahashi N.K."/>
            <person name="Sawano T."/>
            <person name="Inoue R."/>
            <person name="Kaito C."/>
            <person name="Sekimizu K."/>
            <person name="Hirakawa H."/>
            <person name="Kuhara S."/>
            <person name="Goto S."/>
            <person name="Yabuzaki J."/>
            <person name="Kanehisa M."/>
            <person name="Yamashita A."/>
            <person name="Oshima K."/>
            <person name="Furuya K."/>
            <person name="Yoshino C."/>
            <person name="Shiba T."/>
            <person name="Hattori M."/>
            <person name="Ogasawara N."/>
            <person name="Hayashi H."/>
            <person name="Hiramatsu K."/>
        </authorList>
    </citation>
    <scope>NUCLEOTIDE SEQUENCE [LARGE SCALE GENOMIC DNA]</scope>
    <source>
        <strain>N315</strain>
    </source>
</reference>
<evidence type="ECO:0000255" key="1">
    <source>
        <dbReference type="HAMAP-Rule" id="MF_01661"/>
    </source>
</evidence>
<accession>Q7A7T6</accession>
<name>RBSD_STAAN</name>
<organism>
    <name type="scientific">Staphylococcus aureus (strain N315)</name>
    <dbReference type="NCBI Taxonomy" id="158879"/>
    <lineage>
        <taxon>Bacteria</taxon>
        <taxon>Bacillati</taxon>
        <taxon>Bacillota</taxon>
        <taxon>Bacilli</taxon>
        <taxon>Bacillales</taxon>
        <taxon>Staphylococcaceae</taxon>
        <taxon>Staphylococcus</taxon>
    </lineage>
</organism>
<comment type="function">
    <text evidence="1">Catalyzes the interconversion of beta-pyran and beta-furan forms of D-ribose.</text>
</comment>
<comment type="catalytic activity">
    <reaction evidence="1">
        <text>beta-D-ribopyranose = beta-D-ribofuranose</text>
        <dbReference type="Rhea" id="RHEA:25432"/>
        <dbReference type="ChEBI" id="CHEBI:27476"/>
        <dbReference type="ChEBI" id="CHEBI:47002"/>
        <dbReference type="EC" id="5.4.99.62"/>
    </reaction>
</comment>
<comment type="pathway">
    <text evidence="1">Carbohydrate metabolism; D-ribose degradation; D-ribose 5-phosphate from beta-D-ribopyranose: step 1/2.</text>
</comment>
<comment type="subunit">
    <text evidence="1">Homodecamer.</text>
</comment>
<comment type="subcellular location">
    <subcellularLocation>
        <location evidence="1">Cytoplasm</location>
    </subcellularLocation>
</comment>
<comment type="similarity">
    <text evidence="1">Belongs to the RbsD / FucU family. RbsD subfamily.</text>
</comment>
<proteinExistence type="inferred from homology"/>
<keyword id="KW-0119">Carbohydrate metabolism</keyword>
<keyword id="KW-0963">Cytoplasm</keyword>
<keyword id="KW-0413">Isomerase</keyword>
<protein>
    <recommendedName>
        <fullName evidence="1">D-ribose pyranase</fullName>
        <ecNumber evidence="1">5.4.99.62</ecNumber>
    </recommendedName>
</protein>
<feature type="chain" id="PRO_0000346270" description="D-ribose pyranase">
    <location>
        <begin position="1"/>
        <end position="134"/>
    </location>
</feature>
<feature type="active site" description="Proton donor" evidence="1">
    <location>
        <position position="20"/>
    </location>
</feature>
<feature type="binding site" evidence="1">
    <location>
        <position position="28"/>
    </location>
    <ligand>
        <name>substrate</name>
    </ligand>
</feature>
<feature type="binding site" evidence="1">
    <location>
        <position position="99"/>
    </location>
    <ligand>
        <name>substrate</name>
    </ligand>
</feature>
<feature type="binding site" evidence="1">
    <location>
        <begin position="123"/>
        <end position="125"/>
    </location>
    <ligand>
        <name>substrate</name>
    </ligand>
</feature>